<keyword id="KW-0450">Lipoyl</keyword>
<comment type="function">
    <text evidence="1">The glycine cleavage system catalyzes the degradation of glycine. The H protein shuttles the methylamine group of glycine from the P protein to the T protein.</text>
</comment>
<comment type="cofactor">
    <cofactor evidence="1">
        <name>(R)-lipoate</name>
        <dbReference type="ChEBI" id="CHEBI:83088"/>
    </cofactor>
    <text evidence="1">Binds 1 lipoyl cofactor covalently.</text>
</comment>
<comment type="subunit">
    <text evidence="1">The glycine cleavage system is composed of four proteins: P, T, L and H.</text>
</comment>
<comment type="similarity">
    <text evidence="1">Belongs to the GcvH family.</text>
</comment>
<accession>A8GIS0</accession>
<feature type="chain" id="PRO_1000059189" description="Glycine cleavage system H protein">
    <location>
        <begin position="1"/>
        <end position="128"/>
    </location>
</feature>
<feature type="domain" description="Lipoyl-binding" evidence="2">
    <location>
        <begin position="24"/>
        <end position="106"/>
    </location>
</feature>
<feature type="modified residue" description="N6-lipoyllysine" evidence="1">
    <location>
        <position position="65"/>
    </location>
</feature>
<gene>
    <name evidence="1" type="primary">gcvH</name>
    <name type="ordered locus">Spro_3915</name>
</gene>
<proteinExistence type="inferred from homology"/>
<reference key="1">
    <citation type="submission" date="2007-09" db="EMBL/GenBank/DDBJ databases">
        <title>Complete sequence of chromosome of Serratia proteamaculans 568.</title>
        <authorList>
            <consortium name="US DOE Joint Genome Institute"/>
            <person name="Copeland A."/>
            <person name="Lucas S."/>
            <person name="Lapidus A."/>
            <person name="Barry K."/>
            <person name="Glavina del Rio T."/>
            <person name="Dalin E."/>
            <person name="Tice H."/>
            <person name="Pitluck S."/>
            <person name="Chain P."/>
            <person name="Malfatti S."/>
            <person name="Shin M."/>
            <person name="Vergez L."/>
            <person name="Schmutz J."/>
            <person name="Larimer F."/>
            <person name="Land M."/>
            <person name="Hauser L."/>
            <person name="Kyrpides N."/>
            <person name="Kim E."/>
            <person name="Taghavi S."/>
            <person name="Newman L."/>
            <person name="Vangronsveld J."/>
            <person name="van der Lelie D."/>
            <person name="Richardson P."/>
        </authorList>
    </citation>
    <scope>NUCLEOTIDE SEQUENCE [LARGE SCALE GENOMIC DNA]</scope>
    <source>
        <strain>568</strain>
    </source>
</reference>
<dbReference type="EMBL" id="CP000826">
    <property type="protein sequence ID" value="ABV43010.1"/>
    <property type="molecule type" value="Genomic_DNA"/>
</dbReference>
<dbReference type="SMR" id="A8GIS0"/>
<dbReference type="STRING" id="399741.Spro_3915"/>
<dbReference type="KEGG" id="spe:Spro_3915"/>
<dbReference type="eggNOG" id="COG0509">
    <property type="taxonomic scope" value="Bacteria"/>
</dbReference>
<dbReference type="HOGENOM" id="CLU_097408_2_1_6"/>
<dbReference type="OrthoDB" id="9796712at2"/>
<dbReference type="GO" id="GO:0005829">
    <property type="term" value="C:cytosol"/>
    <property type="evidence" value="ECO:0007669"/>
    <property type="project" value="TreeGrafter"/>
</dbReference>
<dbReference type="GO" id="GO:0005960">
    <property type="term" value="C:glycine cleavage complex"/>
    <property type="evidence" value="ECO:0007669"/>
    <property type="project" value="InterPro"/>
</dbReference>
<dbReference type="GO" id="GO:0019464">
    <property type="term" value="P:glycine decarboxylation via glycine cleavage system"/>
    <property type="evidence" value="ECO:0007669"/>
    <property type="project" value="UniProtKB-UniRule"/>
</dbReference>
<dbReference type="CDD" id="cd06848">
    <property type="entry name" value="GCS_H"/>
    <property type="match status" value="1"/>
</dbReference>
<dbReference type="FunFam" id="2.40.50.100:FF:000011">
    <property type="entry name" value="Glycine cleavage system H protein"/>
    <property type="match status" value="1"/>
</dbReference>
<dbReference type="Gene3D" id="2.40.50.100">
    <property type="match status" value="1"/>
</dbReference>
<dbReference type="HAMAP" id="MF_00272">
    <property type="entry name" value="GcvH"/>
    <property type="match status" value="1"/>
</dbReference>
<dbReference type="InterPro" id="IPR003016">
    <property type="entry name" value="2-oxoA_DH_lipoyl-BS"/>
</dbReference>
<dbReference type="InterPro" id="IPR000089">
    <property type="entry name" value="Biotin_lipoyl"/>
</dbReference>
<dbReference type="InterPro" id="IPR002930">
    <property type="entry name" value="GCV_H"/>
</dbReference>
<dbReference type="InterPro" id="IPR033753">
    <property type="entry name" value="GCV_H/Fam206"/>
</dbReference>
<dbReference type="InterPro" id="IPR017453">
    <property type="entry name" value="GCV_H_sub"/>
</dbReference>
<dbReference type="InterPro" id="IPR011053">
    <property type="entry name" value="Single_hybrid_motif"/>
</dbReference>
<dbReference type="NCBIfam" id="TIGR00527">
    <property type="entry name" value="gcvH"/>
    <property type="match status" value="1"/>
</dbReference>
<dbReference type="NCBIfam" id="NF002270">
    <property type="entry name" value="PRK01202.1"/>
    <property type="match status" value="1"/>
</dbReference>
<dbReference type="PANTHER" id="PTHR11715">
    <property type="entry name" value="GLYCINE CLEAVAGE SYSTEM H PROTEIN"/>
    <property type="match status" value="1"/>
</dbReference>
<dbReference type="PANTHER" id="PTHR11715:SF3">
    <property type="entry name" value="GLYCINE CLEAVAGE SYSTEM H PROTEIN-RELATED"/>
    <property type="match status" value="1"/>
</dbReference>
<dbReference type="Pfam" id="PF01597">
    <property type="entry name" value="GCV_H"/>
    <property type="match status" value="1"/>
</dbReference>
<dbReference type="SUPFAM" id="SSF51230">
    <property type="entry name" value="Single hybrid motif"/>
    <property type="match status" value="1"/>
</dbReference>
<dbReference type="PROSITE" id="PS50968">
    <property type="entry name" value="BIOTINYL_LIPOYL"/>
    <property type="match status" value="1"/>
</dbReference>
<dbReference type="PROSITE" id="PS00189">
    <property type="entry name" value="LIPOYL"/>
    <property type="match status" value="1"/>
</dbReference>
<sequence length="128" mass="13539">MSNVPTELKYASSHEWVRSEGNGVYTVGITEHAQELLGDMVFVDLPEVGRTVAAGEDCAVAESVKAASDIYAPISGEIVAVNGELESSPELVNSGPYAEGFLFQIKASDEGELAKLLDATAYQASIDE</sequence>
<evidence type="ECO:0000255" key="1">
    <source>
        <dbReference type="HAMAP-Rule" id="MF_00272"/>
    </source>
</evidence>
<evidence type="ECO:0000255" key="2">
    <source>
        <dbReference type="PROSITE-ProRule" id="PRU01066"/>
    </source>
</evidence>
<organism>
    <name type="scientific">Serratia proteamaculans (strain 568)</name>
    <dbReference type="NCBI Taxonomy" id="399741"/>
    <lineage>
        <taxon>Bacteria</taxon>
        <taxon>Pseudomonadati</taxon>
        <taxon>Pseudomonadota</taxon>
        <taxon>Gammaproteobacteria</taxon>
        <taxon>Enterobacterales</taxon>
        <taxon>Yersiniaceae</taxon>
        <taxon>Serratia</taxon>
    </lineage>
</organism>
<protein>
    <recommendedName>
        <fullName evidence="1">Glycine cleavage system H protein</fullName>
    </recommendedName>
</protein>
<name>GCSH_SERP5</name>